<name>PTH_STRMU</name>
<feature type="chain" id="PRO_0000187827" description="Peptidyl-tRNA hydrolase">
    <location>
        <begin position="1"/>
        <end position="189"/>
    </location>
</feature>
<feature type="active site" description="Proton acceptor" evidence="1">
    <location>
        <position position="20"/>
    </location>
</feature>
<feature type="binding site" evidence="1">
    <location>
        <position position="15"/>
    </location>
    <ligand>
        <name>tRNA</name>
        <dbReference type="ChEBI" id="CHEBI:17843"/>
    </ligand>
</feature>
<feature type="binding site" evidence="1">
    <location>
        <position position="66"/>
    </location>
    <ligand>
        <name>tRNA</name>
        <dbReference type="ChEBI" id="CHEBI:17843"/>
    </ligand>
</feature>
<feature type="binding site" evidence="1">
    <location>
        <position position="68"/>
    </location>
    <ligand>
        <name>tRNA</name>
        <dbReference type="ChEBI" id="CHEBI:17843"/>
    </ligand>
</feature>
<feature type="binding site" evidence="1">
    <location>
        <position position="114"/>
    </location>
    <ligand>
        <name>tRNA</name>
        <dbReference type="ChEBI" id="CHEBI:17843"/>
    </ligand>
</feature>
<feature type="site" description="Discriminates between blocked and unblocked aminoacyl-tRNA" evidence="1">
    <location>
        <position position="10"/>
    </location>
</feature>
<feature type="site" description="Stabilizes the basic form of H active site to accept a proton" evidence="1">
    <location>
        <position position="93"/>
    </location>
</feature>
<keyword id="KW-0963">Cytoplasm</keyword>
<keyword id="KW-0378">Hydrolase</keyword>
<keyword id="KW-1185">Reference proteome</keyword>
<keyword id="KW-0694">RNA-binding</keyword>
<keyword id="KW-0820">tRNA-binding</keyword>
<reference key="1">
    <citation type="journal article" date="2002" name="Proc. Natl. Acad. Sci. U.S.A.">
        <title>Genome sequence of Streptococcus mutans UA159, a cariogenic dental pathogen.</title>
        <authorList>
            <person name="Ajdic D.J."/>
            <person name="McShan W.M."/>
            <person name="McLaughlin R.E."/>
            <person name="Savic G."/>
            <person name="Chang J."/>
            <person name="Carson M.B."/>
            <person name="Primeaux C."/>
            <person name="Tian R."/>
            <person name="Kenton S."/>
            <person name="Jia H.G."/>
            <person name="Lin S.P."/>
            <person name="Qian Y."/>
            <person name="Li S."/>
            <person name="Zhu H."/>
            <person name="Najar F.Z."/>
            <person name="Lai H."/>
            <person name="White J."/>
            <person name="Roe B.A."/>
            <person name="Ferretti J.J."/>
        </authorList>
    </citation>
    <scope>NUCLEOTIDE SEQUENCE [LARGE SCALE GENOMIC DNA]</scope>
    <source>
        <strain>ATCC 700610 / UA159</strain>
    </source>
</reference>
<comment type="function">
    <text evidence="1">Hydrolyzes ribosome-free peptidyl-tRNAs (with 1 or more amino acids incorporated), which drop off the ribosome during protein synthesis, or as a result of ribosome stalling.</text>
</comment>
<comment type="function">
    <text evidence="1">Catalyzes the release of premature peptidyl moieties from peptidyl-tRNA molecules trapped in stalled 50S ribosomal subunits, and thus maintains levels of free tRNAs and 50S ribosomes.</text>
</comment>
<comment type="catalytic activity">
    <reaction evidence="1">
        <text>an N-acyl-L-alpha-aminoacyl-tRNA + H2O = an N-acyl-L-amino acid + a tRNA + H(+)</text>
        <dbReference type="Rhea" id="RHEA:54448"/>
        <dbReference type="Rhea" id="RHEA-COMP:10123"/>
        <dbReference type="Rhea" id="RHEA-COMP:13883"/>
        <dbReference type="ChEBI" id="CHEBI:15377"/>
        <dbReference type="ChEBI" id="CHEBI:15378"/>
        <dbReference type="ChEBI" id="CHEBI:59874"/>
        <dbReference type="ChEBI" id="CHEBI:78442"/>
        <dbReference type="ChEBI" id="CHEBI:138191"/>
        <dbReference type="EC" id="3.1.1.29"/>
    </reaction>
</comment>
<comment type="subunit">
    <text evidence="1">Monomer.</text>
</comment>
<comment type="subcellular location">
    <subcellularLocation>
        <location evidence="1">Cytoplasm</location>
    </subcellularLocation>
</comment>
<comment type="similarity">
    <text evidence="1">Belongs to the PTH family.</text>
</comment>
<sequence length="189" mass="21477">MTKLIVGLGNPGSKYHETKHNVGFMALDRIVKPLNVQFTENKTFKAETVATFINGEKIYFIKPTTFMNASGLAVRAFLAYYNLTVEDLIVIYDDLDMEVGKIRFRQKGSAGGHNGIKSIIKEIGTQEFDRIKIGIGRPKDKMTVVNYVLGKFDKKDEITIFNTLDKVDKAVNYYLQTKNFEQTMQKFNG</sequence>
<proteinExistence type="inferred from homology"/>
<evidence type="ECO:0000255" key="1">
    <source>
        <dbReference type="HAMAP-Rule" id="MF_00083"/>
    </source>
</evidence>
<protein>
    <recommendedName>
        <fullName evidence="1">Peptidyl-tRNA hydrolase</fullName>
        <shortName evidence="1">Pth</shortName>
        <ecNumber evidence="1">3.1.1.29</ecNumber>
    </recommendedName>
</protein>
<organism>
    <name type="scientific">Streptococcus mutans serotype c (strain ATCC 700610 / UA159)</name>
    <dbReference type="NCBI Taxonomy" id="210007"/>
    <lineage>
        <taxon>Bacteria</taxon>
        <taxon>Bacillati</taxon>
        <taxon>Bacillota</taxon>
        <taxon>Bacilli</taxon>
        <taxon>Lactobacillales</taxon>
        <taxon>Streptococcaceae</taxon>
        <taxon>Streptococcus</taxon>
    </lineage>
</organism>
<gene>
    <name evidence="1" type="primary">pth</name>
    <name type="ordered locus">SMU_07</name>
</gene>
<accession>Q8DWN5</accession>
<dbReference type="EC" id="3.1.1.29" evidence="1"/>
<dbReference type="EMBL" id="AE014133">
    <property type="protein sequence ID" value="AAN57798.1"/>
    <property type="molecule type" value="Genomic_DNA"/>
</dbReference>
<dbReference type="RefSeq" id="NP_720492.1">
    <property type="nucleotide sequence ID" value="NC_004350.2"/>
</dbReference>
<dbReference type="RefSeq" id="WP_002262644.1">
    <property type="nucleotide sequence ID" value="NC_004350.2"/>
</dbReference>
<dbReference type="SMR" id="Q8DWN5"/>
<dbReference type="STRING" id="210007.SMU_07"/>
<dbReference type="GeneID" id="93860377"/>
<dbReference type="KEGG" id="smu:SMU_07"/>
<dbReference type="PATRIC" id="fig|210007.7.peg.5"/>
<dbReference type="eggNOG" id="COG0193">
    <property type="taxonomic scope" value="Bacteria"/>
</dbReference>
<dbReference type="HOGENOM" id="CLU_062456_4_1_9"/>
<dbReference type="OrthoDB" id="9800507at2"/>
<dbReference type="PhylomeDB" id="Q8DWN5"/>
<dbReference type="Proteomes" id="UP000002512">
    <property type="component" value="Chromosome"/>
</dbReference>
<dbReference type="GO" id="GO:0005737">
    <property type="term" value="C:cytoplasm"/>
    <property type="evidence" value="ECO:0007669"/>
    <property type="project" value="UniProtKB-SubCell"/>
</dbReference>
<dbReference type="GO" id="GO:0004045">
    <property type="term" value="F:peptidyl-tRNA hydrolase activity"/>
    <property type="evidence" value="ECO:0007669"/>
    <property type="project" value="UniProtKB-UniRule"/>
</dbReference>
<dbReference type="GO" id="GO:0000049">
    <property type="term" value="F:tRNA binding"/>
    <property type="evidence" value="ECO:0007669"/>
    <property type="project" value="UniProtKB-UniRule"/>
</dbReference>
<dbReference type="GO" id="GO:0006515">
    <property type="term" value="P:protein quality control for misfolded or incompletely synthesized proteins"/>
    <property type="evidence" value="ECO:0007669"/>
    <property type="project" value="UniProtKB-UniRule"/>
</dbReference>
<dbReference type="GO" id="GO:0072344">
    <property type="term" value="P:rescue of stalled ribosome"/>
    <property type="evidence" value="ECO:0007669"/>
    <property type="project" value="UniProtKB-UniRule"/>
</dbReference>
<dbReference type="CDD" id="cd00462">
    <property type="entry name" value="PTH"/>
    <property type="match status" value="1"/>
</dbReference>
<dbReference type="FunFam" id="3.40.50.1470:FF:000001">
    <property type="entry name" value="Peptidyl-tRNA hydrolase"/>
    <property type="match status" value="1"/>
</dbReference>
<dbReference type="Gene3D" id="3.40.50.1470">
    <property type="entry name" value="Peptidyl-tRNA hydrolase"/>
    <property type="match status" value="1"/>
</dbReference>
<dbReference type="HAMAP" id="MF_00083">
    <property type="entry name" value="Pept_tRNA_hydro_bact"/>
    <property type="match status" value="1"/>
</dbReference>
<dbReference type="InterPro" id="IPR001328">
    <property type="entry name" value="Pept_tRNA_hydro"/>
</dbReference>
<dbReference type="InterPro" id="IPR018171">
    <property type="entry name" value="Pept_tRNA_hydro_CS"/>
</dbReference>
<dbReference type="InterPro" id="IPR036416">
    <property type="entry name" value="Pept_tRNA_hydro_sf"/>
</dbReference>
<dbReference type="NCBIfam" id="TIGR00447">
    <property type="entry name" value="pth"/>
    <property type="match status" value="1"/>
</dbReference>
<dbReference type="PANTHER" id="PTHR17224">
    <property type="entry name" value="PEPTIDYL-TRNA HYDROLASE"/>
    <property type="match status" value="1"/>
</dbReference>
<dbReference type="PANTHER" id="PTHR17224:SF1">
    <property type="entry name" value="PEPTIDYL-TRNA HYDROLASE"/>
    <property type="match status" value="1"/>
</dbReference>
<dbReference type="Pfam" id="PF01195">
    <property type="entry name" value="Pept_tRNA_hydro"/>
    <property type="match status" value="1"/>
</dbReference>
<dbReference type="SUPFAM" id="SSF53178">
    <property type="entry name" value="Peptidyl-tRNA hydrolase-like"/>
    <property type="match status" value="1"/>
</dbReference>
<dbReference type="PROSITE" id="PS01195">
    <property type="entry name" value="PEPT_TRNA_HYDROL_1"/>
    <property type="match status" value="1"/>
</dbReference>
<dbReference type="PROSITE" id="PS01196">
    <property type="entry name" value="PEPT_TRNA_HYDROL_2"/>
    <property type="match status" value="1"/>
</dbReference>